<name>FER2_RICPR</name>
<sequence length="112" mass="12493">MLRKIKVTFIINDEEERTVEAPIGLSILEIAHSNDLDLEGACEGSLACATCHVMLEEEFYNKLKKPTEAEEDMLDLAFGLTDTSRLGCQIILTEELDGIKVRLPSATRNIKL</sequence>
<keyword id="KW-0001">2Fe-2S</keyword>
<keyword id="KW-0249">Electron transport</keyword>
<keyword id="KW-0408">Iron</keyword>
<keyword id="KW-0411">Iron-sulfur</keyword>
<keyword id="KW-0479">Metal-binding</keyword>
<keyword id="KW-1185">Reference proteome</keyword>
<keyword id="KW-0813">Transport</keyword>
<evidence type="ECO:0000250" key="1"/>
<evidence type="ECO:0000255" key="2">
    <source>
        <dbReference type="PROSITE-ProRule" id="PRU00465"/>
    </source>
</evidence>
<evidence type="ECO:0000305" key="3"/>
<protein>
    <recommendedName>
        <fullName>2Fe-2S ferredoxin</fullName>
    </recommendedName>
    <alternativeName>
        <fullName>Adrenodoxin-like protein</fullName>
    </alternativeName>
</protein>
<dbReference type="EMBL" id="AJ235270">
    <property type="protein sequence ID" value="CAA14664.1"/>
    <property type="molecule type" value="Genomic_DNA"/>
</dbReference>
<dbReference type="PIR" id="A71731">
    <property type="entry name" value="A71731"/>
</dbReference>
<dbReference type="RefSeq" id="NP_220587.1">
    <property type="nucleotide sequence ID" value="NC_000963.1"/>
</dbReference>
<dbReference type="RefSeq" id="WP_004595967.1">
    <property type="nucleotide sequence ID" value="NC_000963.1"/>
</dbReference>
<dbReference type="SMR" id="Q9ZDW6"/>
<dbReference type="STRING" id="272947.gene:17555280"/>
<dbReference type="EnsemblBacteria" id="CAA14664">
    <property type="protein sequence ID" value="CAA14664"/>
    <property type="gene ID" value="CAA14664"/>
</dbReference>
<dbReference type="KEGG" id="rpr:RP199"/>
<dbReference type="PATRIC" id="fig|272947.5.peg.208"/>
<dbReference type="eggNOG" id="COG0633">
    <property type="taxonomic scope" value="Bacteria"/>
</dbReference>
<dbReference type="HOGENOM" id="CLU_082632_5_0_5"/>
<dbReference type="OrthoDB" id="9799640at2"/>
<dbReference type="Proteomes" id="UP000002480">
    <property type="component" value="Chromosome"/>
</dbReference>
<dbReference type="GO" id="GO:0051537">
    <property type="term" value="F:2 iron, 2 sulfur cluster binding"/>
    <property type="evidence" value="ECO:0007669"/>
    <property type="project" value="UniProtKB-KW"/>
</dbReference>
<dbReference type="GO" id="GO:0009055">
    <property type="term" value="F:electron transfer activity"/>
    <property type="evidence" value="ECO:0007669"/>
    <property type="project" value="TreeGrafter"/>
</dbReference>
<dbReference type="GO" id="GO:0046872">
    <property type="term" value="F:metal ion binding"/>
    <property type="evidence" value="ECO:0007669"/>
    <property type="project" value="UniProtKB-KW"/>
</dbReference>
<dbReference type="GO" id="GO:0140647">
    <property type="term" value="P:P450-containing electron transport chain"/>
    <property type="evidence" value="ECO:0007669"/>
    <property type="project" value="InterPro"/>
</dbReference>
<dbReference type="CDD" id="cd00207">
    <property type="entry name" value="fer2"/>
    <property type="match status" value="1"/>
</dbReference>
<dbReference type="Gene3D" id="3.10.20.30">
    <property type="match status" value="1"/>
</dbReference>
<dbReference type="InterPro" id="IPR036010">
    <property type="entry name" value="2Fe-2S_ferredoxin-like_sf"/>
</dbReference>
<dbReference type="InterPro" id="IPR001041">
    <property type="entry name" value="2Fe-2S_ferredoxin-type"/>
</dbReference>
<dbReference type="InterPro" id="IPR001055">
    <property type="entry name" value="Adrenodoxin-like"/>
</dbReference>
<dbReference type="InterPro" id="IPR018298">
    <property type="entry name" value="Adrenodoxin_Fe-S_BS"/>
</dbReference>
<dbReference type="InterPro" id="IPR012675">
    <property type="entry name" value="Beta-grasp_dom_sf"/>
</dbReference>
<dbReference type="PANTHER" id="PTHR23426:SF72">
    <property type="entry name" value="2FE-2S FERREDOXIN-TYPE DOMAIN-CONTAINING PROTEIN"/>
    <property type="match status" value="1"/>
</dbReference>
<dbReference type="PANTHER" id="PTHR23426">
    <property type="entry name" value="FERREDOXIN/ADRENODOXIN"/>
    <property type="match status" value="1"/>
</dbReference>
<dbReference type="Pfam" id="PF00111">
    <property type="entry name" value="Fer2"/>
    <property type="match status" value="1"/>
</dbReference>
<dbReference type="PRINTS" id="PR00355">
    <property type="entry name" value="ADRENODOXIN"/>
</dbReference>
<dbReference type="SUPFAM" id="SSF54292">
    <property type="entry name" value="2Fe-2S ferredoxin-like"/>
    <property type="match status" value="1"/>
</dbReference>
<dbReference type="PROSITE" id="PS51085">
    <property type="entry name" value="2FE2S_FER_2"/>
    <property type="match status" value="1"/>
</dbReference>
<dbReference type="PROSITE" id="PS00814">
    <property type="entry name" value="ADX"/>
    <property type="match status" value="1"/>
</dbReference>
<reference key="1">
    <citation type="journal article" date="1998" name="Nature">
        <title>The genome sequence of Rickettsia prowazekii and the origin of mitochondria.</title>
        <authorList>
            <person name="Andersson S.G.E."/>
            <person name="Zomorodipour A."/>
            <person name="Andersson J.O."/>
            <person name="Sicheritz-Ponten T."/>
            <person name="Alsmark U.C.M."/>
            <person name="Podowski R.M."/>
            <person name="Naeslund A.K."/>
            <person name="Eriksson A.-S."/>
            <person name="Winkler H.H."/>
            <person name="Kurland C.G."/>
        </authorList>
    </citation>
    <scope>NUCLEOTIDE SEQUENCE [LARGE SCALE GENOMIC DNA]</scope>
    <source>
        <strain>Madrid E</strain>
    </source>
</reference>
<feature type="chain" id="PRO_0000201177" description="2Fe-2S ferredoxin">
    <location>
        <begin position="1"/>
        <end position="112"/>
    </location>
</feature>
<feature type="domain" description="2Fe-2S ferredoxin-type" evidence="2">
    <location>
        <begin position="5"/>
        <end position="107"/>
    </location>
</feature>
<feature type="binding site" evidence="2">
    <location>
        <position position="42"/>
    </location>
    <ligand>
        <name>[2Fe-2S] cluster</name>
        <dbReference type="ChEBI" id="CHEBI:190135"/>
    </ligand>
</feature>
<feature type="binding site" evidence="2">
    <location>
        <position position="48"/>
    </location>
    <ligand>
        <name>[2Fe-2S] cluster</name>
        <dbReference type="ChEBI" id="CHEBI:190135"/>
    </ligand>
</feature>
<feature type="binding site" evidence="2">
    <location>
        <position position="51"/>
    </location>
    <ligand>
        <name>[2Fe-2S] cluster</name>
        <dbReference type="ChEBI" id="CHEBI:190135"/>
    </ligand>
</feature>
<feature type="binding site" evidence="2">
    <location>
        <position position="88"/>
    </location>
    <ligand>
        <name>[2Fe-2S] cluster</name>
        <dbReference type="ChEBI" id="CHEBI:190135"/>
    </ligand>
</feature>
<accession>Q9ZDW6</accession>
<proteinExistence type="inferred from homology"/>
<gene>
    <name type="primary">fdxB</name>
    <name type="synonym">fdx</name>
    <name type="ordered locus">RP199</name>
</gene>
<comment type="function">
    <text>Ferredoxin are iron-sulfur proteins that transfer electrons in a wide variety of metabolic reactions.</text>
</comment>
<comment type="cofactor">
    <cofactor evidence="1">
        <name>[2Fe-2S] cluster</name>
        <dbReference type="ChEBI" id="CHEBI:190135"/>
    </cofactor>
    <text evidence="1">Binds 1 [2Fe-2S] cluster.</text>
</comment>
<comment type="similarity">
    <text evidence="3">Belongs to the adrenodoxin/putidaredoxin family.</text>
</comment>
<organism>
    <name type="scientific">Rickettsia prowazekii (strain Madrid E)</name>
    <dbReference type="NCBI Taxonomy" id="272947"/>
    <lineage>
        <taxon>Bacteria</taxon>
        <taxon>Pseudomonadati</taxon>
        <taxon>Pseudomonadota</taxon>
        <taxon>Alphaproteobacteria</taxon>
        <taxon>Rickettsiales</taxon>
        <taxon>Rickettsiaceae</taxon>
        <taxon>Rickettsieae</taxon>
        <taxon>Rickettsia</taxon>
        <taxon>typhus group</taxon>
    </lineage>
</organism>